<protein>
    <recommendedName>
        <fullName>Uncharacterized protein RP760</fullName>
    </recommendedName>
</protein>
<gene>
    <name type="ordered locus">RP760</name>
</gene>
<feature type="chain" id="PRO_0000101416" description="Uncharacterized protein RP760">
    <location>
        <begin position="1"/>
        <end position="373"/>
    </location>
</feature>
<feature type="transmembrane region" description="Helical" evidence="1">
    <location>
        <begin position="180"/>
        <end position="202"/>
    </location>
</feature>
<reference key="1">
    <citation type="journal article" date="1998" name="Nature">
        <title>The genome sequence of Rickettsia prowazekii and the origin of mitochondria.</title>
        <authorList>
            <person name="Andersson S.G.E."/>
            <person name="Zomorodipour A."/>
            <person name="Andersson J.O."/>
            <person name="Sicheritz-Ponten T."/>
            <person name="Alsmark U.C.M."/>
            <person name="Podowski R.M."/>
            <person name="Naeslund A.K."/>
            <person name="Eriksson A.-S."/>
            <person name="Winkler H.H."/>
            <person name="Kurland C.G."/>
        </authorList>
    </citation>
    <scope>NUCLEOTIDE SEQUENCE [LARGE SCALE GENOMIC DNA]</scope>
    <source>
        <strain>Madrid E</strain>
    </source>
</reference>
<organism>
    <name type="scientific">Rickettsia prowazekii (strain Madrid E)</name>
    <dbReference type="NCBI Taxonomy" id="272947"/>
    <lineage>
        <taxon>Bacteria</taxon>
        <taxon>Pseudomonadati</taxon>
        <taxon>Pseudomonadota</taxon>
        <taxon>Alphaproteobacteria</taxon>
        <taxon>Rickettsiales</taxon>
        <taxon>Rickettsiaceae</taxon>
        <taxon>Rickettsieae</taxon>
        <taxon>Rickettsia</taxon>
        <taxon>typhus group</taxon>
    </lineage>
</organism>
<comment type="subcellular location">
    <subcellularLocation>
        <location evidence="2">Membrane</location>
        <topology evidence="2">Single-pass membrane protein</topology>
    </subcellularLocation>
</comment>
<dbReference type="EMBL" id="AJ235273">
    <property type="protein sequence ID" value="CAA15188.1"/>
    <property type="molecule type" value="Genomic_DNA"/>
</dbReference>
<dbReference type="PIR" id="D71636">
    <property type="entry name" value="D71636"/>
</dbReference>
<dbReference type="RefSeq" id="NP_221112.1">
    <property type="nucleotide sequence ID" value="NC_000963.1"/>
</dbReference>
<dbReference type="SMR" id="Q9ZCI0"/>
<dbReference type="EnsemblBacteria" id="CAA15188">
    <property type="protein sequence ID" value="CAA15188"/>
    <property type="gene ID" value="CAA15188"/>
</dbReference>
<dbReference type="KEGG" id="rpr:RP760"/>
<dbReference type="PATRIC" id="fig|272947.5.peg.796"/>
<dbReference type="HOGENOM" id="CLU_602530_0_0_5"/>
<dbReference type="OrthoDB" id="7160912at2"/>
<dbReference type="Proteomes" id="UP000002480">
    <property type="component" value="Chromosome"/>
</dbReference>
<dbReference type="GO" id="GO:0016020">
    <property type="term" value="C:membrane"/>
    <property type="evidence" value="ECO:0007669"/>
    <property type="project" value="UniProtKB-SubCell"/>
</dbReference>
<dbReference type="InterPro" id="IPR020182">
    <property type="entry name" value="DUF5460"/>
</dbReference>
<dbReference type="Pfam" id="PF17544">
    <property type="entry name" value="DUF5460"/>
    <property type="match status" value="1"/>
</dbReference>
<keyword id="KW-0472">Membrane</keyword>
<keyword id="KW-1185">Reference proteome</keyword>
<keyword id="KW-0812">Transmembrane</keyword>
<keyword id="KW-1133">Transmembrane helix</keyword>
<name>Y760_RICPR</name>
<evidence type="ECO:0000255" key="1"/>
<evidence type="ECO:0000305" key="2"/>
<accession>Q9ZCI0</accession>
<proteinExistence type="predicted"/>
<sequence length="373" mass="42191">MHNADCNWKNIMQSFTESPNDFSILHQECSSGLNIPINNIFTDTENNTHLLLDQTVTHNQNGTANILGKIYKVTNGYMFSQGDITSTNGANFLGLNQCTEEAAISVLQNYHSYKETLIPRASFINTLAETLNHLGLYLDNISPMEIGKYILDQFGKTYDEPTTEKSNNDTNCHEYSNSYYYVVALGTLALGSILGYTAKYVWDNYNGKNIKNENIELVRENKQLKFSTLLYENFKNNAFILDEIIKINNLNDIIKLAKSMQEFKSSISSLTNLNNEIIKLNSPSAIALNLASVSKILHEICDNLKGNDSFTTINNFAKLITMIRTENPDSEEYKASIKEILEIFSSHYEEIEELNYATPLLAIEAYSPLEIIE</sequence>